<accession>B0U281</accession>
<organism>
    <name type="scientific">Xylella fastidiosa (strain M12)</name>
    <dbReference type="NCBI Taxonomy" id="405440"/>
    <lineage>
        <taxon>Bacteria</taxon>
        <taxon>Pseudomonadati</taxon>
        <taxon>Pseudomonadota</taxon>
        <taxon>Gammaproteobacteria</taxon>
        <taxon>Lysobacterales</taxon>
        <taxon>Lysobacteraceae</taxon>
        <taxon>Xylella</taxon>
    </lineage>
</organism>
<gene>
    <name evidence="1" type="primary">ilvD</name>
    <name type="ordered locus">Xfasm12_0079</name>
</gene>
<name>ILVD_XYLFM</name>
<proteinExistence type="inferred from homology"/>
<reference key="1">
    <citation type="journal article" date="2010" name="J. Bacteriol.">
        <title>Whole genome sequences of two Xylella fastidiosa strains (M12 and M23) causing almond leaf scorch disease in California.</title>
        <authorList>
            <person name="Chen J."/>
            <person name="Xie G."/>
            <person name="Han S."/>
            <person name="Chertkov O."/>
            <person name="Sims D."/>
            <person name="Civerolo E.L."/>
        </authorList>
    </citation>
    <scope>NUCLEOTIDE SEQUENCE [LARGE SCALE GENOMIC DNA]</scope>
    <source>
        <strain>M12</strain>
    </source>
</reference>
<dbReference type="EC" id="4.2.1.9" evidence="1"/>
<dbReference type="EMBL" id="CP000941">
    <property type="protein sequence ID" value="ACA11120.1"/>
    <property type="molecule type" value="Genomic_DNA"/>
</dbReference>
<dbReference type="RefSeq" id="WP_004085550.1">
    <property type="nucleotide sequence ID" value="NC_010513.1"/>
</dbReference>
<dbReference type="SMR" id="B0U281"/>
<dbReference type="KEGG" id="xfm:Xfasm12_0079"/>
<dbReference type="HOGENOM" id="CLU_014271_4_2_6"/>
<dbReference type="UniPathway" id="UPA00047">
    <property type="reaction ID" value="UER00057"/>
</dbReference>
<dbReference type="UniPathway" id="UPA00049">
    <property type="reaction ID" value="UER00061"/>
</dbReference>
<dbReference type="GO" id="GO:0005829">
    <property type="term" value="C:cytosol"/>
    <property type="evidence" value="ECO:0007669"/>
    <property type="project" value="TreeGrafter"/>
</dbReference>
<dbReference type="GO" id="GO:0051537">
    <property type="term" value="F:2 iron, 2 sulfur cluster binding"/>
    <property type="evidence" value="ECO:0007669"/>
    <property type="project" value="UniProtKB-UniRule"/>
</dbReference>
<dbReference type="GO" id="GO:0004160">
    <property type="term" value="F:dihydroxy-acid dehydratase activity"/>
    <property type="evidence" value="ECO:0007669"/>
    <property type="project" value="UniProtKB-UniRule"/>
</dbReference>
<dbReference type="GO" id="GO:0000287">
    <property type="term" value="F:magnesium ion binding"/>
    <property type="evidence" value="ECO:0007669"/>
    <property type="project" value="UniProtKB-UniRule"/>
</dbReference>
<dbReference type="GO" id="GO:0009097">
    <property type="term" value="P:isoleucine biosynthetic process"/>
    <property type="evidence" value="ECO:0007669"/>
    <property type="project" value="UniProtKB-UniRule"/>
</dbReference>
<dbReference type="GO" id="GO:0009099">
    <property type="term" value="P:L-valine biosynthetic process"/>
    <property type="evidence" value="ECO:0007669"/>
    <property type="project" value="UniProtKB-UniRule"/>
</dbReference>
<dbReference type="FunFam" id="3.50.30.80:FF:000001">
    <property type="entry name" value="Dihydroxy-acid dehydratase"/>
    <property type="match status" value="1"/>
</dbReference>
<dbReference type="Gene3D" id="3.50.30.80">
    <property type="entry name" value="IlvD/EDD C-terminal domain-like"/>
    <property type="match status" value="1"/>
</dbReference>
<dbReference type="HAMAP" id="MF_00012">
    <property type="entry name" value="IlvD"/>
    <property type="match status" value="1"/>
</dbReference>
<dbReference type="InterPro" id="IPR042096">
    <property type="entry name" value="Dihydro-acid_dehy_C"/>
</dbReference>
<dbReference type="InterPro" id="IPR004404">
    <property type="entry name" value="DihydroxyA_deHydtase"/>
</dbReference>
<dbReference type="InterPro" id="IPR020558">
    <property type="entry name" value="DiOHA_6PGluconate_deHydtase_CS"/>
</dbReference>
<dbReference type="InterPro" id="IPR056740">
    <property type="entry name" value="ILV_EDD_C"/>
</dbReference>
<dbReference type="InterPro" id="IPR000581">
    <property type="entry name" value="ILV_EDD_N"/>
</dbReference>
<dbReference type="InterPro" id="IPR037237">
    <property type="entry name" value="IlvD/EDD_N"/>
</dbReference>
<dbReference type="NCBIfam" id="TIGR00110">
    <property type="entry name" value="ilvD"/>
    <property type="match status" value="1"/>
</dbReference>
<dbReference type="NCBIfam" id="NF009103">
    <property type="entry name" value="PRK12448.1"/>
    <property type="match status" value="1"/>
</dbReference>
<dbReference type="PANTHER" id="PTHR43661">
    <property type="entry name" value="D-XYLONATE DEHYDRATASE"/>
    <property type="match status" value="1"/>
</dbReference>
<dbReference type="PANTHER" id="PTHR43661:SF3">
    <property type="entry name" value="D-XYLONATE DEHYDRATASE YAGF-RELATED"/>
    <property type="match status" value="1"/>
</dbReference>
<dbReference type="Pfam" id="PF24877">
    <property type="entry name" value="ILV_EDD_C"/>
    <property type="match status" value="1"/>
</dbReference>
<dbReference type="Pfam" id="PF00920">
    <property type="entry name" value="ILVD_EDD_N"/>
    <property type="match status" value="1"/>
</dbReference>
<dbReference type="SUPFAM" id="SSF143975">
    <property type="entry name" value="IlvD/EDD N-terminal domain-like"/>
    <property type="match status" value="1"/>
</dbReference>
<dbReference type="SUPFAM" id="SSF52016">
    <property type="entry name" value="LeuD/IlvD-like"/>
    <property type="match status" value="1"/>
</dbReference>
<dbReference type="PROSITE" id="PS00886">
    <property type="entry name" value="ILVD_EDD_1"/>
    <property type="match status" value="1"/>
</dbReference>
<dbReference type="PROSITE" id="PS00887">
    <property type="entry name" value="ILVD_EDD_2"/>
    <property type="match status" value="1"/>
</dbReference>
<feature type="chain" id="PRO_1000089433" description="Dihydroxy-acid dehydratase">
    <location>
        <begin position="1"/>
        <end position="610"/>
    </location>
</feature>
<feature type="active site" description="Proton acceptor" evidence="1">
    <location>
        <position position="515"/>
    </location>
</feature>
<feature type="binding site" evidence="1">
    <location>
        <position position="81"/>
    </location>
    <ligand>
        <name>Mg(2+)</name>
        <dbReference type="ChEBI" id="CHEBI:18420"/>
    </ligand>
</feature>
<feature type="binding site" evidence="1">
    <location>
        <position position="122"/>
    </location>
    <ligand>
        <name>[2Fe-2S] cluster</name>
        <dbReference type="ChEBI" id="CHEBI:190135"/>
    </ligand>
</feature>
<feature type="binding site" evidence="1">
    <location>
        <position position="123"/>
    </location>
    <ligand>
        <name>Mg(2+)</name>
        <dbReference type="ChEBI" id="CHEBI:18420"/>
    </ligand>
</feature>
<feature type="binding site" description="via carbamate group" evidence="1">
    <location>
        <position position="124"/>
    </location>
    <ligand>
        <name>Mg(2+)</name>
        <dbReference type="ChEBI" id="CHEBI:18420"/>
    </ligand>
</feature>
<feature type="binding site" evidence="1">
    <location>
        <position position="193"/>
    </location>
    <ligand>
        <name>[2Fe-2S] cluster</name>
        <dbReference type="ChEBI" id="CHEBI:190135"/>
    </ligand>
</feature>
<feature type="binding site" evidence="1">
    <location>
        <position position="489"/>
    </location>
    <ligand>
        <name>Mg(2+)</name>
        <dbReference type="ChEBI" id="CHEBI:18420"/>
    </ligand>
</feature>
<feature type="modified residue" description="N6-carboxylysine" evidence="1">
    <location>
        <position position="124"/>
    </location>
</feature>
<protein>
    <recommendedName>
        <fullName evidence="1">Dihydroxy-acid dehydratase</fullName>
        <shortName evidence="1">DAD</shortName>
        <ecNumber evidence="1">4.2.1.9</ecNumber>
    </recommendedName>
</protein>
<evidence type="ECO:0000255" key="1">
    <source>
        <dbReference type="HAMAP-Rule" id="MF_00012"/>
    </source>
</evidence>
<comment type="function">
    <text evidence="1">Functions in the biosynthesis of branched-chain amino acids. Catalyzes the dehydration of (2R,3R)-2,3-dihydroxy-3-methylpentanoate (2,3-dihydroxy-3-methylvalerate) into 2-oxo-3-methylpentanoate (2-oxo-3-methylvalerate) and of (2R)-2,3-dihydroxy-3-methylbutanoate (2,3-dihydroxyisovalerate) into 2-oxo-3-methylbutanoate (2-oxoisovalerate), the penultimate precursor to L-isoleucine and L-valine, respectively.</text>
</comment>
<comment type="catalytic activity">
    <reaction evidence="1">
        <text>(2R)-2,3-dihydroxy-3-methylbutanoate = 3-methyl-2-oxobutanoate + H2O</text>
        <dbReference type="Rhea" id="RHEA:24809"/>
        <dbReference type="ChEBI" id="CHEBI:11851"/>
        <dbReference type="ChEBI" id="CHEBI:15377"/>
        <dbReference type="ChEBI" id="CHEBI:49072"/>
        <dbReference type="EC" id="4.2.1.9"/>
    </reaction>
    <physiologicalReaction direction="left-to-right" evidence="1">
        <dbReference type="Rhea" id="RHEA:24810"/>
    </physiologicalReaction>
</comment>
<comment type="catalytic activity">
    <reaction evidence="1">
        <text>(2R,3R)-2,3-dihydroxy-3-methylpentanoate = (S)-3-methyl-2-oxopentanoate + H2O</text>
        <dbReference type="Rhea" id="RHEA:27694"/>
        <dbReference type="ChEBI" id="CHEBI:15377"/>
        <dbReference type="ChEBI" id="CHEBI:35146"/>
        <dbReference type="ChEBI" id="CHEBI:49258"/>
        <dbReference type="EC" id="4.2.1.9"/>
    </reaction>
    <physiologicalReaction direction="left-to-right" evidence="1">
        <dbReference type="Rhea" id="RHEA:27695"/>
    </physiologicalReaction>
</comment>
<comment type="cofactor">
    <cofactor evidence="1">
        <name>[2Fe-2S] cluster</name>
        <dbReference type="ChEBI" id="CHEBI:190135"/>
    </cofactor>
    <text evidence="1">Binds 1 [2Fe-2S] cluster per subunit. This cluster acts as a Lewis acid cofactor.</text>
</comment>
<comment type="cofactor">
    <cofactor evidence="1">
        <name>Mg(2+)</name>
        <dbReference type="ChEBI" id="CHEBI:18420"/>
    </cofactor>
</comment>
<comment type="pathway">
    <text evidence="1">Amino-acid biosynthesis; L-isoleucine biosynthesis; L-isoleucine from 2-oxobutanoate: step 3/4.</text>
</comment>
<comment type="pathway">
    <text evidence="1">Amino-acid biosynthesis; L-valine biosynthesis; L-valine from pyruvate: step 3/4.</text>
</comment>
<comment type="subunit">
    <text evidence="1">Homodimer.</text>
</comment>
<comment type="similarity">
    <text evidence="1">Belongs to the IlvD/Edd family.</text>
</comment>
<sequence length="610" mass="65077">MPEYRSKTSTYGRNMAGARALWRATGMKDDDFQKPIIAIANSFTQFVPGHVHLKDLGQLVAREIERLGGVAKEFNTIAVDDGIAMGHDGMLYSLPSREIIADSVEYMANAHCADALVCISNCDKITPGMLMASLRLNIPTVFVSGGPMEAGKTTLADHKLDLVDAMVLAADPHASDEEVATVERSACPTCGSCSGMFTANSMNCLTEALGLSLPGNGTVVATHSDRKQLFLNAGRTVIELCHRWYGAEDATALPRGIATFAAFENAITLDIAMGGSTNTILHLLAAAQEAQVSFTMQDIDRLSRNVPQLCKVAPNTQKYHIEDVHRAGGIFGILAELARGNLLHTDVATVHSKTLGEAIATWDIIGTQDEAVHTFYKAGSAGIPTQVAFSQSTRWPSLDTDRTEGCIRDMEHAFSKEGGLAVLYGNIAQDGCVVKTAGVDASIHVFEGSALVYESQEAAVKGILSDEVQPGMIVVIRYEGPKGGPGMQEMLYPTSYLKSKGLGKQCALFTDGRFSGGTSGLSIGHASPEAAAGGAIGLIRDGDRIRIDIPQRAINVLISEEELASRRLEQHAIGWKPAQSRTRKVSSALKAYSLLATSADKGAVRNKTLL</sequence>
<keyword id="KW-0001">2Fe-2S</keyword>
<keyword id="KW-0028">Amino-acid biosynthesis</keyword>
<keyword id="KW-0100">Branched-chain amino acid biosynthesis</keyword>
<keyword id="KW-0408">Iron</keyword>
<keyword id="KW-0411">Iron-sulfur</keyword>
<keyword id="KW-0456">Lyase</keyword>
<keyword id="KW-0460">Magnesium</keyword>
<keyword id="KW-0479">Metal-binding</keyword>